<organism>
    <name type="scientific">Prochlorococcus marinus (strain MIT 9313)</name>
    <dbReference type="NCBI Taxonomy" id="74547"/>
    <lineage>
        <taxon>Bacteria</taxon>
        <taxon>Bacillati</taxon>
        <taxon>Cyanobacteriota</taxon>
        <taxon>Cyanophyceae</taxon>
        <taxon>Synechococcales</taxon>
        <taxon>Prochlorococcaceae</taxon>
        <taxon>Prochlorococcus</taxon>
    </lineage>
</organism>
<gene>
    <name evidence="1" type="primary">rpsS</name>
    <name evidence="1" type="synonym">rps19</name>
    <name type="ordered locus">PMT_1736</name>
</gene>
<name>RS19_PROMM</name>
<dbReference type="EMBL" id="BX548175">
    <property type="protein sequence ID" value="CAE21911.1"/>
    <property type="molecule type" value="Genomic_DNA"/>
</dbReference>
<dbReference type="RefSeq" id="WP_011131103.1">
    <property type="nucleotide sequence ID" value="NC_005071.1"/>
</dbReference>
<dbReference type="SMR" id="Q7TUP5"/>
<dbReference type="KEGG" id="pmt:PMT_1736"/>
<dbReference type="eggNOG" id="COG0185">
    <property type="taxonomic scope" value="Bacteria"/>
</dbReference>
<dbReference type="HOGENOM" id="CLU_144911_0_1_3"/>
<dbReference type="OrthoDB" id="9797833at2"/>
<dbReference type="Proteomes" id="UP000001423">
    <property type="component" value="Chromosome"/>
</dbReference>
<dbReference type="GO" id="GO:0005737">
    <property type="term" value="C:cytoplasm"/>
    <property type="evidence" value="ECO:0007669"/>
    <property type="project" value="UniProtKB-ARBA"/>
</dbReference>
<dbReference type="GO" id="GO:0015935">
    <property type="term" value="C:small ribosomal subunit"/>
    <property type="evidence" value="ECO:0007669"/>
    <property type="project" value="InterPro"/>
</dbReference>
<dbReference type="GO" id="GO:0019843">
    <property type="term" value="F:rRNA binding"/>
    <property type="evidence" value="ECO:0007669"/>
    <property type="project" value="UniProtKB-UniRule"/>
</dbReference>
<dbReference type="GO" id="GO:0003735">
    <property type="term" value="F:structural constituent of ribosome"/>
    <property type="evidence" value="ECO:0007669"/>
    <property type="project" value="InterPro"/>
</dbReference>
<dbReference type="GO" id="GO:0000028">
    <property type="term" value="P:ribosomal small subunit assembly"/>
    <property type="evidence" value="ECO:0007669"/>
    <property type="project" value="TreeGrafter"/>
</dbReference>
<dbReference type="GO" id="GO:0006412">
    <property type="term" value="P:translation"/>
    <property type="evidence" value="ECO:0007669"/>
    <property type="project" value="UniProtKB-UniRule"/>
</dbReference>
<dbReference type="FunFam" id="3.30.860.10:FF:000001">
    <property type="entry name" value="30S ribosomal protein S19"/>
    <property type="match status" value="1"/>
</dbReference>
<dbReference type="Gene3D" id="3.30.860.10">
    <property type="entry name" value="30s Ribosomal Protein S19, Chain A"/>
    <property type="match status" value="1"/>
</dbReference>
<dbReference type="HAMAP" id="MF_00531">
    <property type="entry name" value="Ribosomal_uS19"/>
    <property type="match status" value="1"/>
</dbReference>
<dbReference type="InterPro" id="IPR002222">
    <property type="entry name" value="Ribosomal_uS19"/>
</dbReference>
<dbReference type="InterPro" id="IPR005732">
    <property type="entry name" value="Ribosomal_uS19_bac-type"/>
</dbReference>
<dbReference type="InterPro" id="IPR020934">
    <property type="entry name" value="Ribosomal_uS19_CS"/>
</dbReference>
<dbReference type="InterPro" id="IPR023575">
    <property type="entry name" value="Ribosomal_uS19_SF"/>
</dbReference>
<dbReference type="NCBIfam" id="TIGR01050">
    <property type="entry name" value="rpsS_bact"/>
    <property type="match status" value="1"/>
</dbReference>
<dbReference type="PANTHER" id="PTHR11880">
    <property type="entry name" value="RIBOSOMAL PROTEIN S19P FAMILY MEMBER"/>
    <property type="match status" value="1"/>
</dbReference>
<dbReference type="PANTHER" id="PTHR11880:SF8">
    <property type="entry name" value="SMALL RIBOSOMAL SUBUNIT PROTEIN US19M"/>
    <property type="match status" value="1"/>
</dbReference>
<dbReference type="Pfam" id="PF00203">
    <property type="entry name" value="Ribosomal_S19"/>
    <property type="match status" value="1"/>
</dbReference>
<dbReference type="PIRSF" id="PIRSF002144">
    <property type="entry name" value="Ribosomal_S19"/>
    <property type="match status" value="1"/>
</dbReference>
<dbReference type="PRINTS" id="PR00975">
    <property type="entry name" value="RIBOSOMALS19"/>
</dbReference>
<dbReference type="SUPFAM" id="SSF54570">
    <property type="entry name" value="Ribosomal protein S19"/>
    <property type="match status" value="1"/>
</dbReference>
<dbReference type="PROSITE" id="PS00323">
    <property type="entry name" value="RIBOSOMAL_S19"/>
    <property type="match status" value="1"/>
</dbReference>
<accession>Q7TUP5</accession>
<reference key="1">
    <citation type="journal article" date="2003" name="Nature">
        <title>Genome divergence in two Prochlorococcus ecotypes reflects oceanic niche differentiation.</title>
        <authorList>
            <person name="Rocap G."/>
            <person name="Larimer F.W."/>
            <person name="Lamerdin J.E."/>
            <person name="Malfatti S."/>
            <person name="Chain P."/>
            <person name="Ahlgren N.A."/>
            <person name="Arellano A."/>
            <person name="Coleman M."/>
            <person name="Hauser L."/>
            <person name="Hess W.R."/>
            <person name="Johnson Z.I."/>
            <person name="Land M.L."/>
            <person name="Lindell D."/>
            <person name="Post A.F."/>
            <person name="Regala W."/>
            <person name="Shah M."/>
            <person name="Shaw S.L."/>
            <person name="Steglich C."/>
            <person name="Sullivan M.B."/>
            <person name="Ting C.S."/>
            <person name="Tolonen A."/>
            <person name="Webb E.A."/>
            <person name="Zinser E.R."/>
            <person name="Chisholm S.W."/>
        </authorList>
    </citation>
    <scope>NUCLEOTIDE SEQUENCE [LARGE SCALE GENOMIC DNA]</scope>
    <source>
        <strain>MIT 9313</strain>
    </source>
</reference>
<keyword id="KW-1185">Reference proteome</keyword>
<keyword id="KW-0687">Ribonucleoprotein</keyword>
<keyword id="KW-0689">Ribosomal protein</keyword>
<keyword id="KW-0694">RNA-binding</keyword>
<keyword id="KW-0699">rRNA-binding</keyword>
<sequence>MGRSLKKGPFIADSLLRKLEKQNADDDKSVIKTWSRASTILPMMIGHTIAVHNGRSHVPVFITEQMVGHKLGEFAPTRTFKGHIKDKKGGR</sequence>
<proteinExistence type="inferred from homology"/>
<comment type="function">
    <text evidence="1">Protein S19 forms a complex with S13 that binds strongly to the 16S ribosomal RNA.</text>
</comment>
<comment type="similarity">
    <text evidence="1">Belongs to the universal ribosomal protein uS19 family.</text>
</comment>
<feature type="chain" id="PRO_0000129880" description="Small ribosomal subunit protein uS19">
    <location>
        <begin position="1"/>
        <end position="91"/>
    </location>
</feature>
<evidence type="ECO:0000255" key="1">
    <source>
        <dbReference type="HAMAP-Rule" id="MF_00531"/>
    </source>
</evidence>
<evidence type="ECO:0000305" key="2"/>
<protein>
    <recommendedName>
        <fullName evidence="1">Small ribosomal subunit protein uS19</fullName>
    </recommendedName>
    <alternativeName>
        <fullName evidence="2">30S ribosomal protein S19</fullName>
    </alternativeName>
</protein>